<accession>Q02Z13</accession>
<name>KHSE_LACLS</name>
<gene>
    <name evidence="1" type="primary">thrB</name>
    <name type="ordered locus">LACR_1281</name>
</gene>
<evidence type="ECO:0000255" key="1">
    <source>
        <dbReference type="HAMAP-Rule" id="MF_00384"/>
    </source>
</evidence>
<sequence>MKIIVPATSANLGAGFDSIGIAVSLYLTVEVLEESSDWKIDHDLGENIPTDERNLLLTTLSAVLEDKNVALPAKYHLKMTSEVPLARGLGSSSSVIIAGIELANQLAKLNLTSDEKLKLACEIEGHPDNVAPALLGNLVIASTVAGKTSHIVADFPSCALLAFVPDYELKTVESRQVLPNELTYKEAVAASSIANVLTASLLTNNLEVAGQMMEADRFHESYRASLIPELQLLREIGHEFGAYGTYLSGAGPTVMLLVPDNKLTLLTEKIMEKNLTGHLYPLKIDNKGLQVEESVF</sequence>
<dbReference type="EC" id="2.7.1.39" evidence="1"/>
<dbReference type="EMBL" id="CP000425">
    <property type="protein sequence ID" value="ABJ72809.1"/>
    <property type="molecule type" value="Genomic_DNA"/>
</dbReference>
<dbReference type="RefSeq" id="WP_011676280.1">
    <property type="nucleotide sequence ID" value="NC_008527.1"/>
</dbReference>
<dbReference type="SMR" id="Q02Z13"/>
<dbReference type="KEGG" id="llc:LACR_1281"/>
<dbReference type="HOGENOM" id="CLU_041243_0_0_9"/>
<dbReference type="UniPathway" id="UPA00050">
    <property type="reaction ID" value="UER00064"/>
</dbReference>
<dbReference type="Proteomes" id="UP000000240">
    <property type="component" value="Chromosome"/>
</dbReference>
<dbReference type="GO" id="GO:0005737">
    <property type="term" value="C:cytoplasm"/>
    <property type="evidence" value="ECO:0007669"/>
    <property type="project" value="UniProtKB-SubCell"/>
</dbReference>
<dbReference type="GO" id="GO:0005524">
    <property type="term" value="F:ATP binding"/>
    <property type="evidence" value="ECO:0007669"/>
    <property type="project" value="UniProtKB-UniRule"/>
</dbReference>
<dbReference type="GO" id="GO:0004413">
    <property type="term" value="F:homoserine kinase activity"/>
    <property type="evidence" value="ECO:0007669"/>
    <property type="project" value="UniProtKB-UniRule"/>
</dbReference>
<dbReference type="GO" id="GO:0009088">
    <property type="term" value="P:threonine biosynthetic process"/>
    <property type="evidence" value="ECO:0007669"/>
    <property type="project" value="UniProtKB-UniRule"/>
</dbReference>
<dbReference type="Gene3D" id="3.30.230.10">
    <property type="match status" value="1"/>
</dbReference>
<dbReference type="Gene3D" id="3.30.70.890">
    <property type="entry name" value="GHMP kinase, C-terminal domain"/>
    <property type="match status" value="1"/>
</dbReference>
<dbReference type="HAMAP" id="MF_00384">
    <property type="entry name" value="Homoser_kinase"/>
    <property type="match status" value="1"/>
</dbReference>
<dbReference type="InterPro" id="IPR013750">
    <property type="entry name" value="GHMP_kinase_C_dom"/>
</dbReference>
<dbReference type="InterPro" id="IPR036554">
    <property type="entry name" value="GHMP_kinase_C_sf"/>
</dbReference>
<dbReference type="InterPro" id="IPR006204">
    <property type="entry name" value="GHMP_kinase_N_dom"/>
</dbReference>
<dbReference type="InterPro" id="IPR006203">
    <property type="entry name" value="GHMP_knse_ATP-bd_CS"/>
</dbReference>
<dbReference type="InterPro" id="IPR000870">
    <property type="entry name" value="Homoserine_kinase"/>
</dbReference>
<dbReference type="InterPro" id="IPR020568">
    <property type="entry name" value="Ribosomal_Su5_D2-typ_SF"/>
</dbReference>
<dbReference type="InterPro" id="IPR014721">
    <property type="entry name" value="Ribsml_uS5_D2-typ_fold_subgr"/>
</dbReference>
<dbReference type="NCBIfam" id="TIGR00191">
    <property type="entry name" value="thrB"/>
    <property type="match status" value="1"/>
</dbReference>
<dbReference type="PANTHER" id="PTHR20861:SF1">
    <property type="entry name" value="HOMOSERINE KINASE"/>
    <property type="match status" value="1"/>
</dbReference>
<dbReference type="PANTHER" id="PTHR20861">
    <property type="entry name" value="HOMOSERINE/4-DIPHOSPHOCYTIDYL-2-C-METHYL-D-ERYTHRITOL KINASE"/>
    <property type="match status" value="1"/>
</dbReference>
<dbReference type="Pfam" id="PF08544">
    <property type="entry name" value="GHMP_kinases_C"/>
    <property type="match status" value="1"/>
</dbReference>
<dbReference type="Pfam" id="PF00288">
    <property type="entry name" value="GHMP_kinases_N"/>
    <property type="match status" value="1"/>
</dbReference>
<dbReference type="PIRSF" id="PIRSF000676">
    <property type="entry name" value="Homoser_kin"/>
    <property type="match status" value="1"/>
</dbReference>
<dbReference type="PRINTS" id="PR00958">
    <property type="entry name" value="HOMSERKINASE"/>
</dbReference>
<dbReference type="SUPFAM" id="SSF55060">
    <property type="entry name" value="GHMP Kinase, C-terminal domain"/>
    <property type="match status" value="1"/>
</dbReference>
<dbReference type="SUPFAM" id="SSF54211">
    <property type="entry name" value="Ribosomal protein S5 domain 2-like"/>
    <property type="match status" value="1"/>
</dbReference>
<dbReference type="PROSITE" id="PS00627">
    <property type="entry name" value="GHMP_KINASES_ATP"/>
    <property type="match status" value="1"/>
</dbReference>
<proteinExistence type="inferred from homology"/>
<feature type="chain" id="PRO_1000049139" description="Homoserine kinase">
    <location>
        <begin position="1"/>
        <end position="296"/>
    </location>
</feature>
<feature type="binding site" evidence="1">
    <location>
        <begin position="84"/>
        <end position="94"/>
    </location>
    <ligand>
        <name>ATP</name>
        <dbReference type="ChEBI" id="CHEBI:30616"/>
    </ligand>
</feature>
<reference key="1">
    <citation type="journal article" date="2006" name="Proc. Natl. Acad. Sci. U.S.A.">
        <title>Comparative genomics of the lactic acid bacteria.</title>
        <authorList>
            <person name="Makarova K.S."/>
            <person name="Slesarev A."/>
            <person name="Wolf Y.I."/>
            <person name="Sorokin A."/>
            <person name="Mirkin B."/>
            <person name="Koonin E.V."/>
            <person name="Pavlov A."/>
            <person name="Pavlova N."/>
            <person name="Karamychev V."/>
            <person name="Polouchine N."/>
            <person name="Shakhova V."/>
            <person name="Grigoriev I."/>
            <person name="Lou Y."/>
            <person name="Rohksar D."/>
            <person name="Lucas S."/>
            <person name="Huang K."/>
            <person name="Goodstein D.M."/>
            <person name="Hawkins T."/>
            <person name="Plengvidhya V."/>
            <person name="Welker D."/>
            <person name="Hughes J."/>
            <person name="Goh Y."/>
            <person name="Benson A."/>
            <person name="Baldwin K."/>
            <person name="Lee J.-H."/>
            <person name="Diaz-Muniz I."/>
            <person name="Dosti B."/>
            <person name="Smeianov V."/>
            <person name="Wechter W."/>
            <person name="Barabote R."/>
            <person name="Lorca G."/>
            <person name="Altermann E."/>
            <person name="Barrangou R."/>
            <person name="Ganesan B."/>
            <person name="Xie Y."/>
            <person name="Rawsthorne H."/>
            <person name="Tamir D."/>
            <person name="Parker C."/>
            <person name="Breidt F."/>
            <person name="Broadbent J.R."/>
            <person name="Hutkins R."/>
            <person name="O'Sullivan D."/>
            <person name="Steele J."/>
            <person name="Unlu G."/>
            <person name="Saier M.H. Jr."/>
            <person name="Klaenhammer T."/>
            <person name="Richardson P."/>
            <person name="Kozyavkin S."/>
            <person name="Weimer B.C."/>
            <person name="Mills D.A."/>
        </authorList>
    </citation>
    <scope>NUCLEOTIDE SEQUENCE [LARGE SCALE GENOMIC DNA]</scope>
    <source>
        <strain>SK11</strain>
    </source>
</reference>
<keyword id="KW-0028">Amino-acid biosynthesis</keyword>
<keyword id="KW-0067">ATP-binding</keyword>
<keyword id="KW-0963">Cytoplasm</keyword>
<keyword id="KW-0418">Kinase</keyword>
<keyword id="KW-0547">Nucleotide-binding</keyword>
<keyword id="KW-0791">Threonine biosynthesis</keyword>
<keyword id="KW-0808">Transferase</keyword>
<protein>
    <recommendedName>
        <fullName evidence="1">Homoserine kinase</fullName>
        <shortName evidence="1">HK</shortName>
        <shortName evidence="1">HSK</shortName>
        <ecNumber evidence="1">2.7.1.39</ecNumber>
    </recommendedName>
</protein>
<organism>
    <name type="scientific">Lactococcus lactis subsp. cremoris (strain SK11)</name>
    <dbReference type="NCBI Taxonomy" id="272622"/>
    <lineage>
        <taxon>Bacteria</taxon>
        <taxon>Bacillati</taxon>
        <taxon>Bacillota</taxon>
        <taxon>Bacilli</taxon>
        <taxon>Lactobacillales</taxon>
        <taxon>Streptococcaceae</taxon>
        <taxon>Lactococcus</taxon>
        <taxon>Lactococcus cremoris subsp. cremoris</taxon>
    </lineage>
</organism>
<comment type="function">
    <text evidence="1">Catalyzes the ATP-dependent phosphorylation of L-homoserine to L-homoserine phosphate.</text>
</comment>
<comment type="catalytic activity">
    <reaction evidence="1">
        <text>L-homoserine + ATP = O-phospho-L-homoserine + ADP + H(+)</text>
        <dbReference type="Rhea" id="RHEA:13985"/>
        <dbReference type="ChEBI" id="CHEBI:15378"/>
        <dbReference type="ChEBI" id="CHEBI:30616"/>
        <dbReference type="ChEBI" id="CHEBI:57476"/>
        <dbReference type="ChEBI" id="CHEBI:57590"/>
        <dbReference type="ChEBI" id="CHEBI:456216"/>
        <dbReference type="EC" id="2.7.1.39"/>
    </reaction>
</comment>
<comment type="pathway">
    <text evidence="1">Amino-acid biosynthesis; L-threonine biosynthesis; L-threonine from L-aspartate: step 4/5.</text>
</comment>
<comment type="subcellular location">
    <subcellularLocation>
        <location evidence="1">Cytoplasm</location>
    </subcellularLocation>
</comment>
<comment type="similarity">
    <text evidence="1">Belongs to the GHMP kinase family. Homoserine kinase subfamily.</text>
</comment>